<accession>B4U648</accession>
<comment type="function">
    <text evidence="1">Catalyzes the last two sequential reactions in the de novo biosynthetic pathway for UDP-N-acetylglucosamine (UDP-GlcNAc). The C-terminal domain catalyzes the transfer of acetyl group from acetyl coenzyme A to glucosamine-1-phosphate (GlcN-1-P) to produce N-acetylglucosamine-1-phosphate (GlcNAc-1-P), which is converted into UDP-GlcNAc by the transfer of uridine 5-monophosphate (from uridine 5-triphosphate), a reaction catalyzed by the N-terminal domain.</text>
</comment>
<comment type="catalytic activity">
    <reaction evidence="1">
        <text>alpha-D-glucosamine 1-phosphate + acetyl-CoA = N-acetyl-alpha-D-glucosamine 1-phosphate + CoA + H(+)</text>
        <dbReference type="Rhea" id="RHEA:13725"/>
        <dbReference type="ChEBI" id="CHEBI:15378"/>
        <dbReference type="ChEBI" id="CHEBI:57287"/>
        <dbReference type="ChEBI" id="CHEBI:57288"/>
        <dbReference type="ChEBI" id="CHEBI:57776"/>
        <dbReference type="ChEBI" id="CHEBI:58516"/>
        <dbReference type="EC" id="2.3.1.157"/>
    </reaction>
</comment>
<comment type="catalytic activity">
    <reaction evidence="1">
        <text>N-acetyl-alpha-D-glucosamine 1-phosphate + UTP + H(+) = UDP-N-acetyl-alpha-D-glucosamine + diphosphate</text>
        <dbReference type="Rhea" id="RHEA:13509"/>
        <dbReference type="ChEBI" id="CHEBI:15378"/>
        <dbReference type="ChEBI" id="CHEBI:33019"/>
        <dbReference type="ChEBI" id="CHEBI:46398"/>
        <dbReference type="ChEBI" id="CHEBI:57705"/>
        <dbReference type="ChEBI" id="CHEBI:57776"/>
        <dbReference type="EC" id="2.7.7.23"/>
    </reaction>
</comment>
<comment type="cofactor">
    <cofactor evidence="1">
        <name>Mg(2+)</name>
        <dbReference type="ChEBI" id="CHEBI:18420"/>
    </cofactor>
    <text evidence="1">Binds 1 Mg(2+) ion per subunit.</text>
</comment>
<comment type="pathway">
    <text evidence="1">Nucleotide-sugar biosynthesis; UDP-N-acetyl-alpha-D-glucosamine biosynthesis; N-acetyl-alpha-D-glucosamine 1-phosphate from alpha-D-glucosamine 6-phosphate (route II): step 2/2.</text>
</comment>
<comment type="pathway">
    <text evidence="1">Nucleotide-sugar biosynthesis; UDP-N-acetyl-alpha-D-glucosamine biosynthesis; UDP-N-acetyl-alpha-D-glucosamine from N-acetyl-alpha-D-glucosamine 1-phosphate: step 1/1.</text>
</comment>
<comment type="pathway">
    <text evidence="1">Bacterial outer membrane biogenesis; LPS lipid A biosynthesis.</text>
</comment>
<comment type="subunit">
    <text evidence="1">Homotrimer.</text>
</comment>
<comment type="subcellular location">
    <subcellularLocation>
        <location evidence="1">Cytoplasm</location>
    </subcellularLocation>
</comment>
<comment type="similarity">
    <text evidence="1">In the N-terminal section; belongs to the N-acetylglucosamine-1-phosphate uridyltransferase family.</text>
</comment>
<comment type="similarity">
    <text evidence="1">In the C-terminal section; belongs to the transferase hexapeptide repeat family.</text>
</comment>
<protein>
    <recommendedName>
        <fullName evidence="1">Bifunctional protein GlmU</fullName>
    </recommendedName>
    <domain>
        <recommendedName>
            <fullName evidence="1">UDP-N-acetylglucosamine pyrophosphorylase</fullName>
            <ecNumber evidence="1">2.7.7.23</ecNumber>
        </recommendedName>
        <alternativeName>
            <fullName evidence="1">N-acetylglucosamine-1-phosphate uridyltransferase</fullName>
        </alternativeName>
    </domain>
    <domain>
        <recommendedName>
            <fullName evidence="1">Glucosamine-1-phosphate N-acetyltransferase</fullName>
            <ecNumber evidence="1">2.3.1.157</ecNumber>
        </recommendedName>
    </domain>
</protein>
<evidence type="ECO:0000255" key="1">
    <source>
        <dbReference type="HAMAP-Rule" id="MF_01631"/>
    </source>
</evidence>
<gene>
    <name evidence="1" type="primary">glmU</name>
    <name type="ordered locus">HY04AAS1_0026</name>
</gene>
<reference key="1">
    <citation type="journal article" date="2009" name="J. Bacteriol.">
        <title>Complete and draft genome sequences of six members of the Aquificales.</title>
        <authorList>
            <person name="Reysenbach A.-L."/>
            <person name="Hamamura N."/>
            <person name="Podar M."/>
            <person name="Griffiths E."/>
            <person name="Ferreira S."/>
            <person name="Hochstein R."/>
            <person name="Heidelberg J."/>
            <person name="Johnson J."/>
            <person name="Mead D."/>
            <person name="Pohorille A."/>
            <person name="Sarmiento M."/>
            <person name="Schweighofer K."/>
            <person name="Seshadri R."/>
            <person name="Voytek M.A."/>
        </authorList>
    </citation>
    <scope>NUCLEOTIDE SEQUENCE [LARGE SCALE GENOMIC DNA]</scope>
    <source>
        <strain>Y04AAS1</strain>
    </source>
</reference>
<keyword id="KW-0012">Acyltransferase</keyword>
<keyword id="KW-0133">Cell shape</keyword>
<keyword id="KW-0961">Cell wall biogenesis/degradation</keyword>
<keyword id="KW-0963">Cytoplasm</keyword>
<keyword id="KW-0460">Magnesium</keyword>
<keyword id="KW-0479">Metal-binding</keyword>
<keyword id="KW-0511">Multifunctional enzyme</keyword>
<keyword id="KW-0548">Nucleotidyltransferase</keyword>
<keyword id="KW-0573">Peptidoglycan synthesis</keyword>
<keyword id="KW-0677">Repeat</keyword>
<keyword id="KW-0808">Transferase</keyword>
<dbReference type="EC" id="2.7.7.23" evidence="1"/>
<dbReference type="EC" id="2.3.1.157" evidence="1"/>
<dbReference type="EMBL" id="CP001130">
    <property type="protein sequence ID" value="ACG56718.1"/>
    <property type="molecule type" value="Genomic_DNA"/>
</dbReference>
<dbReference type="RefSeq" id="WP_012513075.1">
    <property type="nucleotide sequence ID" value="NC_011126.1"/>
</dbReference>
<dbReference type="SMR" id="B4U648"/>
<dbReference type="STRING" id="380749.HY04AAS1_0026"/>
<dbReference type="KEGG" id="hya:HY04AAS1_0026"/>
<dbReference type="eggNOG" id="COG1207">
    <property type="taxonomic scope" value="Bacteria"/>
</dbReference>
<dbReference type="HOGENOM" id="CLU_029499_15_2_0"/>
<dbReference type="OrthoDB" id="9775031at2"/>
<dbReference type="UniPathway" id="UPA00113">
    <property type="reaction ID" value="UER00532"/>
</dbReference>
<dbReference type="UniPathway" id="UPA00113">
    <property type="reaction ID" value="UER00533"/>
</dbReference>
<dbReference type="UniPathway" id="UPA00973"/>
<dbReference type="GO" id="GO:0005737">
    <property type="term" value="C:cytoplasm"/>
    <property type="evidence" value="ECO:0007669"/>
    <property type="project" value="UniProtKB-SubCell"/>
</dbReference>
<dbReference type="GO" id="GO:0016020">
    <property type="term" value="C:membrane"/>
    <property type="evidence" value="ECO:0007669"/>
    <property type="project" value="GOC"/>
</dbReference>
<dbReference type="GO" id="GO:0019134">
    <property type="term" value="F:glucosamine-1-phosphate N-acetyltransferase activity"/>
    <property type="evidence" value="ECO:0007669"/>
    <property type="project" value="UniProtKB-UniRule"/>
</dbReference>
<dbReference type="GO" id="GO:0000287">
    <property type="term" value="F:magnesium ion binding"/>
    <property type="evidence" value="ECO:0007669"/>
    <property type="project" value="UniProtKB-UniRule"/>
</dbReference>
<dbReference type="GO" id="GO:0003977">
    <property type="term" value="F:UDP-N-acetylglucosamine diphosphorylase activity"/>
    <property type="evidence" value="ECO:0007669"/>
    <property type="project" value="UniProtKB-UniRule"/>
</dbReference>
<dbReference type="GO" id="GO:0000902">
    <property type="term" value="P:cell morphogenesis"/>
    <property type="evidence" value="ECO:0007669"/>
    <property type="project" value="UniProtKB-UniRule"/>
</dbReference>
<dbReference type="GO" id="GO:0071555">
    <property type="term" value="P:cell wall organization"/>
    <property type="evidence" value="ECO:0007669"/>
    <property type="project" value="UniProtKB-KW"/>
</dbReference>
<dbReference type="GO" id="GO:0009245">
    <property type="term" value="P:lipid A biosynthetic process"/>
    <property type="evidence" value="ECO:0007669"/>
    <property type="project" value="UniProtKB-UniRule"/>
</dbReference>
<dbReference type="GO" id="GO:0009252">
    <property type="term" value="P:peptidoglycan biosynthetic process"/>
    <property type="evidence" value="ECO:0007669"/>
    <property type="project" value="UniProtKB-UniRule"/>
</dbReference>
<dbReference type="GO" id="GO:0008360">
    <property type="term" value="P:regulation of cell shape"/>
    <property type="evidence" value="ECO:0007669"/>
    <property type="project" value="UniProtKB-KW"/>
</dbReference>
<dbReference type="GO" id="GO:0006048">
    <property type="term" value="P:UDP-N-acetylglucosamine biosynthetic process"/>
    <property type="evidence" value="ECO:0007669"/>
    <property type="project" value="UniProtKB-UniPathway"/>
</dbReference>
<dbReference type="CDD" id="cd02540">
    <property type="entry name" value="GT2_GlmU_N_bac"/>
    <property type="match status" value="1"/>
</dbReference>
<dbReference type="CDD" id="cd03353">
    <property type="entry name" value="LbH_GlmU_C"/>
    <property type="match status" value="1"/>
</dbReference>
<dbReference type="Gene3D" id="2.160.10.10">
    <property type="entry name" value="Hexapeptide repeat proteins"/>
    <property type="match status" value="1"/>
</dbReference>
<dbReference type="Gene3D" id="3.90.550.10">
    <property type="entry name" value="Spore Coat Polysaccharide Biosynthesis Protein SpsA, Chain A"/>
    <property type="match status" value="1"/>
</dbReference>
<dbReference type="HAMAP" id="MF_01631">
    <property type="entry name" value="GlmU"/>
    <property type="match status" value="1"/>
</dbReference>
<dbReference type="InterPro" id="IPR005882">
    <property type="entry name" value="Bifunctional_GlmU"/>
</dbReference>
<dbReference type="InterPro" id="IPR050065">
    <property type="entry name" value="GlmU-like"/>
</dbReference>
<dbReference type="InterPro" id="IPR038009">
    <property type="entry name" value="GlmU_C_LbH"/>
</dbReference>
<dbReference type="InterPro" id="IPR005835">
    <property type="entry name" value="NTP_transferase_dom"/>
</dbReference>
<dbReference type="InterPro" id="IPR029044">
    <property type="entry name" value="Nucleotide-diphossugar_trans"/>
</dbReference>
<dbReference type="InterPro" id="IPR011004">
    <property type="entry name" value="Trimer_LpxA-like_sf"/>
</dbReference>
<dbReference type="NCBIfam" id="TIGR01173">
    <property type="entry name" value="glmU"/>
    <property type="match status" value="1"/>
</dbReference>
<dbReference type="PANTHER" id="PTHR43584:SF3">
    <property type="entry name" value="BIFUNCTIONAL PROTEIN GLMU"/>
    <property type="match status" value="1"/>
</dbReference>
<dbReference type="PANTHER" id="PTHR43584">
    <property type="entry name" value="NUCLEOTIDYL TRANSFERASE"/>
    <property type="match status" value="1"/>
</dbReference>
<dbReference type="Pfam" id="PF00483">
    <property type="entry name" value="NTP_transferase"/>
    <property type="match status" value="1"/>
</dbReference>
<dbReference type="SUPFAM" id="SSF53448">
    <property type="entry name" value="Nucleotide-diphospho-sugar transferases"/>
    <property type="match status" value="1"/>
</dbReference>
<dbReference type="SUPFAM" id="SSF51161">
    <property type="entry name" value="Trimeric LpxA-like enzymes"/>
    <property type="match status" value="1"/>
</dbReference>
<organism>
    <name type="scientific">Hydrogenobaculum sp. (strain Y04AAS1)</name>
    <dbReference type="NCBI Taxonomy" id="380749"/>
    <lineage>
        <taxon>Bacteria</taxon>
        <taxon>Pseudomonadati</taxon>
        <taxon>Aquificota</taxon>
        <taxon>Aquificia</taxon>
        <taxon>Aquificales</taxon>
        <taxon>Aquificaceae</taxon>
        <taxon>Hydrogenobaculum</taxon>
    </lineage>
</organism>
<sequence>MKAIILAAGLGTRFKSEKHKVLHEMLGKPIIWYVLNYIKQSNIVDIALVVSHKKESIIEALKHENVSFFEQANPKGGTADALLSAKAFFEGMDDYILVTNGDAPLVKPDTIKGMQRFLHMVEEYEKIKVGALVLSSFLPDPTGYGRIVKNGKGDVIKIVEEKEATYEQKQINEVNGGVYMFYVPYLKEAVKHLKPSEKTNELYITDIIEIMTNLGYTCRSFMASEITEIFGVNDRWELSFAESVIKMRILENLARSGVTIHSPESVYIEPDVQVELDAEIFPNVVLKGNTVIHKKAKVMNGSYLENATIKEKATVLPMSYIKNSTVEEEAIVGPMCHIRDNSVVGKGSHVGSFVELKNAKLQENVMAKHLSYLGDVNIGKKTNIGAGTVVANFDGKQKYQSYIGQKAFIGSNSLIIAPRNIGDFAFIAGGSVITKDIPPKALAIERAELKILEDKSKVKDE</sequence>
<feature type="chain" id="PRO_1000186461" description="Bifunctional protein GlmU">
    <location>
        <begin position="1"/>
        <end position="461"/>
    </location>
</feature>
<feature type="region of interest" description="Pyrophosphorylase" evidence="1">
    <location>
        <begin position="1"/>
        <end position="235"/>
    </location>
</feature>
<feature type="region of interest" description="Linker" evidence="1">
    <location>
        <begin position="236"/>
        <end position="256"/>
    </location>
</feature>
<feature type="region of interest" description="N-acetyltransferase" evidence="1">
    <location>
        <begin position="257"/>
        <end position="461"/>
    </location>
</feature>
<feature type="active site" description="Proton acceptor" evidence="1">
    <location>
        <position position="369"/>
    </location>
</feature>
<feature type="binding site" evidence="1">
    <location>
        <begin position="6"/>
        <end position="9"/>
    </location>
    <ligand>
        <name>UDP-N-acetyl-alpha-D-glucosamine</name>
        <dbReference type="ChEBI" id="CHEBI:57705"/>
    </ligand>
</feature>
<feature type="binding site" evidence="1">
    <location>
        <position position="20"/>
    </location>
    <ligand>
        <name>UDP-N-acetyl-alpha-D-glucosamine</name>
        <dbReference type="ChEBI" id="CHEBI:57705"/>
    </ligand>
</feature>
<feature type="binding site" evidence="1">
    <location>
        <position position="71"/>
    </location>
    <ligand>
        <name>UDP-N-acetyl-alpha-D-glucosamine</name>
        <dbReference type="ChEBI" id="CHEBI:57705"/>
    </ligand>
</feature>
<feature type="binding site" evidence="1">
    <location>
        <begin position="77"/>
        <end position="78"/>
    </location>
    <ligand>
        <name>UDP-N-acetyl-alpha-D-glucosamine</name>
        <dbReference type="ChEBI" id="CHEBI:57705"/>
    </ligand>
</feature>
<feature type="binding site" evidence="1">
    <location>
        <position position="102"/>
    </location>
    <ligand>
        <name>Mg(2+)</name>
        <dbReference type="ChEBI" id="CHEBI:18420"/>
    </ligand>
</feature>
<feature type="binding site" evidence="1">
    <location>
        <position position="145"/>
    </location>
    <ligand>
        <name>UDP-N-acetyl-alpha-D-glucosamine</name>
        <dbReference type="ChEBI" id="CHEBI:57705"/>
    </ligand>
</feature>
<feature type="binding site" evidence="1">
    <location>
        <position position="160"/>
    </location>
    <ligand>
        <name>UDP-N-acetyl-alpha-D-glucosamine</name>
        <dbReference type="ChEBI" id="CHEBI:57705"/>
    </ligand>
</feature>
<feature type="binding site" evidence="1">
    <location>
        <position position="175"/>
    </location>
    <ligand>
        <name>UDP-N-acetyl-alpha-D-glucosamine</name>
        <dbReference type="ChEBI" id="CHEBI:57705"/>
    </ligand>
</feature>
<feature type="binding site" evidence="1">
    <location>
        <position position="233"/>
    </location>
    <ligand>
        <name>Mg(2+)</name>
        <dbReference type="ChEBI" id="CHEBI:18420"/>
    </ligand>
</feature>
<feature type="binding site" evidence="1">
    <location>
        <position position="233"/>
    </location>
    <ligand>
        <name>UDP-N-acetyl-alpha-D-glucosamine</name>
        <dbReference type="ChEBI" id="CHEBI:57705"/>
    </ligand>
</feature>
<feature type="binding site" evidence="1">
    <location>
        <position position="339"/>
    </location>
    <ligand>
        <name>UDP-N-acetyl-alpha-D-glucosamine</name>
        <dbReference type="ChEBI" id="CHEBI:57705"/>
    </ligand>
</feature>
<feature type="binding site" evidence="1">
    <location>
        <position position="357"/>
    </location>
    <ligand>
        <name>UDP-N-acetyl-alpha-D-glucosamine</name>
        <dbReference type="ChEBI" id="CHEBI:57705"/>
    </ligand>
</feature>
<feature type="binding site" evidence="1">
    <location>
        <position position="372"/>
    </location>
    <ligand>
        <name>UDP-N-acetyl-alpha-D-glucosamine</name>
        <dbReference type="ChEBI" id="CHEBI:57705"/>
    </ligand>
</feature>
<feature type="binding site" evidence="1">
    <location>
        <position position="383"/>
    </location>
    <ligand>
        <name>UDP-N-acetyl-alpha-D-glucosamine</name>
        <dbReference type="ChEBI" id="CHEBI:57705"/>
    </ligand>
</feature>
<feature type="binding site" evidence="1">
    <location>
        <position position="386"/>
    </location>
    <ligand>
        <name>acetyl-CoA</name>
        <dbReference type="ChEBI" id="CHEBI:57288"/>
    </ligand>
</feature>
<feature type="binding site" evidence="1">
    <location>
        <position position="411"/>
    </location>
    <ligand>
        <name>acetyl-CoA</name>
        <dbReference type="ChEBI" id="CHEBI:57288"/>
    </ligand>
</feature>
<feature type="binding site" evidence="1">
    <location>
        <position position="429"/>
    </location>
    <ligand>
        <name>acetyl-CoA</name>
        <dbReference type="ChEBI" id="CHEBI:57288"/>
    </ligand>
</feature>
<feature type="binding site" evidence="1">
    <location>
        <position position="446"/>
    </location>
    <ligand>
        <name>acetyl-CoA</name>
        <dbReference type="ChEBI" id="CHEBI:57288"/>
    </ligand>
</feature>
<proteinExistence type="inferred from homology"/>
<name>GLMU_HYDS0</name>